<protein>
    <recommendedName>
        <fullName evidence="2">Glycine dehydrogenase (decarboxylating)</fullName>
        <ecNumber evidence="2">1.4.4.2</ecNumber>
    </recommendedName>
    <alternativeName>
        <fullName evidence="2">Glycine cleavage system P-protein</fullName>
    </alternativeName>
    <alternativeName>
        <fullName evidence="2">Glycine decarboxylase</fullName>
    </alternativeName>
    <alternativeName>
        <fullName evidence="2">Glycine dehydrogenase (aminomethyl-transferring)</fullName>
    </alternativeName>
</protein>
<feature type="initiator methionine" description="Removed" evidence="1">
    <location>
        <position position="1"/>
    </location>
</feature>
<feature type="chain" id="PRO_0000166914" description="Glycine dehydrogenase (decarboxylating)">
    <location>
        <begin position="2"/>
        <end position="957"/>
    </location>
</feature>
<feature type="modified residue" description="N6-(pyridoxal phosphate)lysine" evidence="2">
    <location>
        <position position="708"/>
    </location>
</feature>
<dbReference type="EC" id="1.4.4.2" evidence="2"/>
<dbReference type="EMBL" id="AE014075">
    <property type="protein sequence ID" value="AAN81931.1"/>
    <property type="molecule type" value="Genomic_DNA"/>
</dbReference>
<dbReference type="RefSeq" id="WP_000195037.1">
    <property type="nucleotide sequence ID" value="NZ_CP051263.1"/>
</dbReference>
<dbReference type="SMR" id="Q8FE67"/>
<dbReference type="STRING" id="199310.c3483"/>
<dbReference type="KEGG" id="ecc:c3483"/>
<dbReference type="eggNOG" id="COG0403">
    <property type="taxonomic scope" value="Bacteria"/>
</dbReference>
<dbReference type="eggNOG" id="COG1003">
    <property type="taxonomic scope" value="Bacteria"/>
</dbReference>
<dbReference type="HOGENOM" id="CLU_004620_1_1_6"/>
<dbReference type="BioCyc" id="ECOL199310:C3483-MONOMER"/>
<dbReference type="Proteomes" id="UP000001410">
    <property type="component" value="Chromosome"/>
</dbReference>
<dbReference type="GO" id="GO:0005829">
    <property type="term" value="C:cytosol"/>
    <property type="evidence" value="ECO:0007669"/>
    <property type="project" value="TreeGrafter"/>
</dbReference>
<dbReference type="GO" id="GO:0005960">
    <property type="term" value="C:glycine cleavage complex"/>
    <property type="evidence" value="ECO:0007669"/>
    <property type="project" value="TreeGrafter"/>
</dbReference>
<dbReference type="GO" id="GO:0016594">
    <property type="term" value="F:glycine binding"/>
    <property type="evidence" value="ECO:0007669"/>
    <property type="project" value="TreeGrafter"/>
</dbReference>
<dbReference type="GO" id="GO:0004375">
    <property type="term" value="F:glycine dehydrogenase (decarboxylating) activity"/>
    <property type="evidence" value="ECO:0007669"/>
    <property type="project" value="UniProtKB-EC"/>
</dbReference>
<dbReference type="GO" id="GO:0030170">
    <property type="term" value="F:pyridoxal phosphate binding"/>
    <property type="evidence" value="ECO:0007669"/>
    <property type="project" value="TreeGrafter"/>
</dbReference>
<dbReference type="GO" id="GO:0019464">
    <property type="term" value="P:glycine decarboxylation via glycine cleavage system"/>
    <property type="evidence" value="ECO:0007669"/>
    <property type="project" value="UniProtKB-UniRule"/>
</dbReference>
<dbReference type="CDD" id="cd00613">
    <property type="entry name" value="GDC-P"/>
    <property type="match status" value="2"/>
</dbReference>
<dbReference type="FunFam" id="3.40.640.10:FF:000005">
    <property type="entry name" value="Glycine dehydrogenase (decarboxylating), mitochondrial"/>
    <property type="match status" value="1"/>
</dbReference>
<dbReference type="FunFam" id="3.90.1150.10:FF:000007">
    <property type="entry name" value="Glycine dehydrogenase (decarboxylating), mitochondrial"/>
    <property type="match status" value="1"/>
</dbReference>
<dbReference type="FunFam" id="3.40.640.10:FF:000007">
    <property type="entry name" value="glycine dehydrogenase (Decarboxylating), mitochondrial"/>
    <property type="match status" value="1"/>
</dbReference>
<dbReference type="Gene3D" id="3.90.1150.10">
    <property type="entry name" value="Aspartate Aminotransferase, domain 1"/>
    <property type="match status" value="1"/>
</dbReference>
<dbReference type="Gene3D" id="3.40.640.10">
    <property type="entry name" value="Type I PLP-dependent aspartate aminotransferase-like (Major domain)"/>
    <property type="match status" value="2"/>
</dbReference>
<dbReference type="HAMAP" id="MF_00711">
    <property type="entry name" value="GcvP"/>
    <property type="match status" value="1"/>
</dbReference>
<dbReference type="InterPro" id="IPR003437">
    <property type="entry name" value="GcvP"/>
</dbReference>
<dbReference type="InterPro" id="IPR049316">
    <property type="entry name" value="GDC-P_C"/>
</dbReference>
<dbReference type="InterPro" id="IPR049315">
    <property type="entry name" value="GDC-P_N"/>
</dbReference>
<dbReference type="InterPro" id="IPR020581">
    <property type="entry name" value="GDC_P"/>
</dbReference>
<dbReference type="InterPro" id="IPR015424">
    <property type="entry name" value="PyrdxlP-dep_Trfase"/>
</dbReference>
<dbReference type="InterPro" id="IPR015421">
    <property type="entry name" value="PyrdxlP-dep_Trfase_major"/>
</dbReference>
<dbReference type="InterPro" id="IPR015422">
    <property type="entry name" value="PyrdxlP-dep_Trfase_small"/>
</dbReference>
<dbReference type="NCBIfam" id="TIGR00461">
    <property type="entry name" value="gcvP"/>
    <property type="match status" value="1"/>
</dbReference>
<dbReference type="NCBIfam" id="NF003346">
    <property type="entry name" value="PRK04366.1"/>
    <property type="match status" value="1"/>
</dbReference>
<dbReference type="PANTHER" id="PTHR11773:SF13">
    <property type="entry name" value="GLYCINE DEHYDROGENASE (DECARBOXYLATING)"/>
    <property type="match status" value="1"/>
</dbReference>
<dbReference type="PANTHER" id="PTHR11773">
    <property type="entry name" value="GLYCINE DEHYDROGENASE, DECARBOXYLATING"/>
    <property type="match status" value="1"/>
</dbReference>
<dbReference type="Pfam" id="PF21478">
    <property type="entry name" value="GcvP2_C"/>
    <property type="match status" value="1"/>
</dbReference>
<dbReference type="Pfam" id="PF02347">
    <property type="entry name" value="GDC-P"/>
    <property type="match status" value="2"/>
</dbReference>
<dbReference type="SUPFAM" id="SSF53383">
    <property type="entry name" value="PLP-dependent transferases"/>
    <property type="match status" value="2"/>
</dbReference>
<gene>
    <name evidence="2" type="primary">gcvP</name>
    <name type="ordered locus">c3483</name>
</gene>
<keyword id="KW-0560">Oxidoreductase</keyword>
<keyword id="KW-0663">Pyridoxal phosphate</keyword>
<keyword id="KW-1185">Reference proteome</keyword>
<name>GCSP_ECOL6</name>
<accession>Q8FE67</accession>
<comment type="function">
    <text evidence="2">The glycine cleavage system catalyzes the degradation of glycine. The P protein binds the alpha-amino group of glycine through its pyridoxal phosphate cofactor; CO(2) is released and the remaining methylamine moiety is then transferred to the lipoamide cofactor of the H protein.</text>
</comment>
<comment type="catalytic activity">
    <reaction evidence="2">
        <text>N(6)-[(R)-lipoyl]-L-lysyl-[glycine-cleavage complex H protein] + glycine + H(+) = N(6)-[(R)-S(8)-aminomethyldihydrolipoyl]-L-lysyl-[glycine-cleavage complex H protein] + CO2</text>
        <dbReference type="Rhea" id="RHEA:24304"/>
        <dbReference type="Rhea" id="RHEA-COMP:10494"/>
        <dbReference type="Rhea" id="RHEA-COMP:10495"/>
        <dbReference type="ChEBI" id="CHEBI:15378"/>
        <dbReference type="ChEBI" id="CHEBI:16526"/>
        <dbReference type="ChEBI" id="CHEBI:57305"/>
        <dbReference type="ChEBI" id="CHEBI:83099"/>
        <dbReference type="ChEBI" id="CHEBI:83143"/>
        <dbReference type="EC" id="1.4.4.2"/>
    </reaction>
</comment>
<comment type="cofactor">
    <cofactor evidence="2">
        <name>pyridoxal 5'-phosphate</name>
        <dbReference type="ChEBI" id="CHEBI:597326"/>
    </cofactor>
</comment>
<comment type="subunit">
    <text evidence="2">The glycine cleavage system is composed of four proteins: P, T, L and H.</text>
</comment>
<comment type="similarity">
    <text evidence="2">Belongs to the GcvP family.</text>
</comment>
<sequence length="957" mass="104309">MTQTLSQLENSGAFIERHIGPDAAQQQEMLNAVGAQSLNALTGQIVPKDIQLATPPQVGAPATEYAALAELKAIASRNKRFTSYIGMGYTAVQLPPVILRNMLENPGWYTAYTPYQPEVSQGRLEALLNFQQVTLDLTGLDMASASLLDEATAAAEAMAMAKRVSKLKNANRFFVASDVHPQTLDVVRTRAETFGFEVIVDDAQKVLDHQDVFGVLLQQVGTTGEIHDYTALISELKSRKIVVSVAADIMALVLLTAPGKQGADIVFGSAQRFGVPMGYGGPHAAFFAAKDEYKRSMPGRIIGVSKDAAGNTALRMAMQTREQHIRREKANSNICTSQVLLANIASLYAVYHGPVGLKRIANRIHRLTDILAAGLQQKGLKLRHAHYFDTLCVEVADKAGVLARAEAAEINLRSDILNAVGITLDETTTRENVMQLFSVLLGDNHGLDIDTLDKDVAHDSRSIQAAMLRDDEILTHPVFNRYHSETEMMRYMHSLERKDLALNQAMIPLGSCTMKLNAAAEMIPITWPEFAELHPFCPPEQAEGYQQMIAQLADWLVKLTGYDAVCMQPNSGAQGEYAGLLAIRHYHESRNEGHRDICLIPASAHGTNPASAHMSGMQVVVVACDKNGNIDLTDLRAKAEQAGDNLSCIMVTYPSTHGVYEETIREVCEVVHQFGGQVYLDGANMNAQVGITSPGFIGADVSHLNLHKTFCIPHGGGGPGMGPIGVKAHLAPFVPGHSVVQIEGMLTRQGAVSAAPFGSASILPISWMYIRMMGAEGLKKASQVAILNANYIASRLQDAFPVLYTGRDGRVAHECILDIRPLKEETGISELDIAKRLIDYGFHAPTMSFPVAGTLMVEPTESESKVELDRFIDAMLAIRAEIDQVKAGVWPLEDNPLVNAPHIQSELVAEWAHPYSREVAVFPAGVADKYWPTVKRLDDVYGDRNLFCSCVPISEYQ</sequence>
<organism>
    <name type="scientific">Escherichia coli O6:H1 (strain CFT073 / ATCC 700928 / UPEC)</name>
    <dbReference type="NCBI Taxonomy" id="199310"/>
    <lineage>
        <taxon>Bacteria</taxon>
        <taxon>Pseudomonadati</taxon>
        <taxon>Pseudomonadota</taxon>
        <taxon>Gammaproteobacteria</taxon>
        <taxon>Enterobacterales</taxon>
        <taxon>Enterobacteriaceae</taxon>
        <taxon>Escherichia</taxon>
    </lineage>
</organism>
<evidence type="ECO:0000250" key="1"/>
<evidence type="ECO:0000255" key="2">
    <source>
        <dbReference type="HAMAP-Rule" id="MF_00711"/>
    </source>
</evidence>
<reference key="1">
    <citation type="journal article" date="2002" name="Proc. Natl. Acad. Sci. U.S.A.">
        <title>Extensive mosaic structure revealed by the complete genome sequence of uropathogenic Escherichia coli.</title>
        <authorList>
            <person name="Welch R.A."/>
            <person name="Burland V."/>
            <person name="Plunkett G. III"/>
            <person name="Redford P."/>
            <person name="Roesch P."/>
            <person name="Rasko D."/>
            <person name="Buckles E.L."/>
            <person name="Liou S.-R."/>
            <person name="Boutin A."/>
            <person name="Hackett J."/>
            <person name="Stroud D."/>
            <person name="Mayhew G.F."/>
            <person name="Rose D.J."/>
            <person name="Zhou S."/>
            <person name="Schwartz D.C."/>
            <person name="Perna N.T."/>
            <person name="Mobley H.L.T."/>
            <person name="Donnenberg M.S."/>
            <person name="Blattner F.R."/>
        </authorList>
    </citation>
    <scope>NUCLEOTIDE SEQUENCE [LARGE SCALE GENOMIC DNA]</scope>
    <source>
        <strain>CFT073 / ATCC 700928 / UPEC</strain>
    </source>
</reference>
<proteinExistence type="inferred from homology"/>